<protein>
    <recommendedName>
        <fullName>rRNA biogenesis protein RRP36</fullName>
    </recommendedName>
    <alternativeName>
        <fullName>Ribosomal RNA-processing protein 36</fullName>
    </alternativeName>
</protein>
<keyword id="KW-0175">Coiled coil</keyword>
<keyword id="KW-0539">Nucleus</keyword>
<keyword id="KW-1185">Reference proteome</keyword>
<keyword id="KW-0687">Ribonucleoprotein</keyword>
<keyword id="KW-0690">Ribosome biogenesis</keyword>
<keyword id="KW-0698">rRNA processing</keyword>
<gene>
    <name type="primary">RRP36</name>
    <name type="ordered locus">Pa_2_9620</name>
    <name type="ORF">PODANS_2_9620</name>
</gene>
<proteinExistence type="inferred from homology"/>
<comment type="function">
    <text evidence="1">Component of the 90S pre-ribosome involved in the maturation of rRNAs. Required for early cleavages of the pre-RNAs in the 40S ribosomal subunit maturation pathway (By similarity).</text>
</comment>
<comment type="subunit">
    <text evidence="1">Associates with 90S and pre-40S pre-ribosomal particles.</text>
</comment>
<comment type="subcellular location">
    <subcellularLocation>
        <location evidence="1">Nucleus</location>
        <location evidence="1">Nucleolus</location>
    </subcellularLocation>
</comment>
<comment type="similarity">
    <text evidence="4">Belongs to the RRP36 family.</text>
</comment>
<feature type="chain" id="PRO_0000397653" description="rRNA biogenesis protein RRP36">
    <location>
        <begin position="1"/>
        <end position="330"/>
    </location>
</feature>
<feature type="region of interest" description="Disordered" evidence="3">
    <location>
        <begin position="1"/>
        <end position="189"/>
    </location>
</feature>
<feature type="region of interest" description="Disordered" evidence="3">
    <location>
        <begin position="242"/>
        <end position="264"/>
    </location>
</feature>
<feature type="coiled-coil region" evidence="2">
    <location>
        <begin position="212"/>
        <end position="272"/>
    </location>
</feature>
<feature type="compositionally biased region" description="Acidic residues" evidence="3">
    <location>
        <begin position="25"/>
        <end position="38"/>
    </location>
</feature>
<feature type="compositionally biased region" description="Acidic residues" evidence="3">
    <location>
        <begin position="61"/>
        <end position="82"/>
    </location>
</feature>
<feature type="compositionally biased region" description="Low complexity" evidence="3">
    <location>
        <begin position="113"/>
        <end position="131"/>
    </location>
</feature>
<feature type="compositionally biased region" description="Basic and acidic residues" evidence="3">
    <location>
        <begin position="132"/>
        <end position="146"/>
    </location>
</feature>
<feature type="compositionally biased region" description="Basic and acidic residues" evidence="3">
    <location>
        <begin position="243"/>
        <end position="264"/>
    </location>
</feature>
<reference key="1">
    <citation type="journal article" date="2008" name="Genome Biol.">
        <title>The genome sequence of the model ascomycete fungus Podospora anserina.</title>
        <authorList>
            <person name="Espagne E."/>
            <person name="Lespinet O."/>
            <person name="Malagnac F."/>
            <person name="Da Silva C."/>
            <person name="Jaillon O."/>
            <person name="Porcel B.M."/>
            <person name="Couloux A."/>
            <person name="Aury J.-M."/>
            <person name="Segurens B."/>
            <person name="Poulain J."/>
            <person name="Anthouard V."/>
            <person name="Grossetete S."/>
            <person name="Khalili H."/>
            <person name="Coppin E."/>
            <person name="Dequard-Chablat M."/>
            <person name="Picard M."/>
            <person name="Contamine V."/>
            <person name="Arnaise S."/>
            <person name="Bourdais A."/>
            <person name="Berteaux-Lecellier V."/>
            <person name="Gautheret D."/>
            <person name="de Vries R.P."/>
            <person name="Battaglia E."/>
            <person name="Coutinho P.M."/>
            <person name="Danchin E.G.J."/>
            <person name="Henrissat B."/>
            <person name="El Khoury R."/>
            <person name="Sainsard-Chanet A."/>
            <person name="Boivin A."/>
            <person name="Pinan-Lucarre B."/>
            <person name="Sellem C.H."/>
            <person name="Debuchy R."/>
            <person name="Wincker P."/>
            <person name="Weissenbach J."/>
            <person name="Silar P."/>
        </authorList>
    </citation>
    <scope>NUCLEOTIDE SEQUENCE [LARGE SCALE GENOMIC DNA]</scope>
    <source>
        <strain>S / ATCC MYA-4624 / DSM 980 / FGSC 10383</strain>
    </source>
</reference>
<reference key="2">
    <citation type="journal article" date="2014" name="Genetics">
        <title>Maintaining two mating types: Structure of the mating type locus and its role in heterokaryosis in Podospora anserina.</title>
        <authorList>
            <person name="Grognet P."/>
            <person name="Bidard F."/>
            <person name="Kuchly C."/>
            <person name="Tong L.C.H."/>
            <person name="Coppin E."/>
            <person name="Benkhali J.A."/>
            <person name="Couloux A."/>
            <person name="Wincker P."/>
            <person name="Debuchy R."/>
            <person name="Silar P."/>
        </authorList>
    </citation>
    <scope>GENOME REANNOTATION</scope>
    <source>
        <strain>S / ATCC MYA-4624 / DSM 980 / FGSC 10383</strain>
    </source>
</reference>
<evidence type="ECO:0000250" key="1"/>
<evidence type="ECO:0000255" key="2"/>
<evidence type="ECO:0000256" key="3">
    <source>
        <dbReference type="SAM" id="MobiDB-lite"/>
    </source>
</evidence>
<evidence type="ECO:0000305" key="4"/>
<sequence length="330" mass="37914">MSSVKRKQPPATLLQRRVRPRYEPEPESDVEEMSDAPSEEGAGFDSEDEEMSEAEMRSGSDEENSELGSDPEDGEDESEDDTPQPTHQLSFGALAKAQAALGDKLNKRKRRSSSAASEASSSRDNSNNDNKFSLEKNHKKPLEKPSRTSKHAPVELSSKRQVSRRRDFLLDPTSTKPQHRDPRFFAPSTMSATSKIDEIKARKAYAFLDEYREKEMQELRVAIKKSKNAEEKEKLQKALLSMESKKKAQERKDKAQKVLDEHKKKEKELVRQGKNPFYLKRSEQKKRVVVETFKGMKKGQVDRAIERRRKKVAGKEKKLLPWARRTVEDR</sequence>
<dbReference type="EMBL" id="CU640366">
    <property type="protein sequence ID" value="CAP73598.1"/>
    <property type="molecule type" value="Genomic_DNA"/>
</dbReference>
<dbReference type="EMBL" id="FO904937">
    <property type="protein sequence ID" value="CDP26001.1"/>
    <property type="molecule type" value="Genomic_DNA"/>
</dbReference>
<dbReference type="RefSeq" id="XP_001911770.1">
    <property type="nucleotide sequence ID" value="XM_001911735.1"/>
</dbReference>
<dbReference type="SMR" id="B2B720"/>
<dbReference type="FunCoup" id="B2B720">
    <property type="interactions" value="527"/>
</dbReference>
<dbReference type="STRING" id="515849.B2B720"/>
<dbReference type="GeneID" id="6195895"/>
<dbReference type="KEGG" id="pan:PODANSg8815"/>
<dbReference type="VEuPathDB" id="FungiDB:PODANS_2_9620"/>
<dbReference type="eggNOG" id="KOG3190">
    <property type="taxonomic scope" value="Eukaryota"/>
</dbReference>
<dbReference type="HOGENOM" id="CLU_048802_0_0_1"/>
<dbReference type="InParanoid" id="B2B720"/>
<dbReference type="OrthoDB" id="448446at2759"/>
<dbReference type="Proteomes" id="UP000001197">
    <property type="component" value="Chromosome 2"/>
</dbReference>
<dbReference type="GO" id="GO:0030686">
    <property type="term" value="C:90S preribosome"/>
    <property type="evidence" value="ECO:0007669"/>
    <property type="project" value="TreeGrafter"/>
</dbReference>
<dbReference type="GO" id="GO:0005730">
    <property type="term" value="C:nucleolus"/>
    <property type="evidence" value="ECO:0007669"/>
    <property type="project" value="UniProtKB-SubCell"/>
</dbReference>
<dbReference type="GO" id="GO:0000462">
    <property type="term" value="P:maturation of SSU-rRNA from tricistronic rRNA transcript (SSU-rRNA, 5.8S rRNA, LSU-rRNA)"/>
    <property type="evidence" value="ECO:0007669"/>
    <property type="project" value="TreeGrafter"/>
</dbReference>
<dbReference type="InterPro" id="IPR009292">
    <property type="entry name" value="RRP36"/>
</dbReference>
<dbReference type="PANTHER" id="PTHR21738">
    <property type="entry name" value="RIBOSOMAL RNA PROCESSING PROTEIN 36 HOMOLOG"/>
    <property type="match status" value="1"/>
</dbReference>
<dbReference type="PANTHER" id="PTHR21738:SF0">
    <property type="entry name" value="RIBOSOMAL RNA PROCESSING PROTEIN 36 HOMOLOG"/>
    <property type="match status" value="1"/>
</dbReference>
<dbReference type="Pfam" id="PF06102">
    <property type="entry name" value="RRP36"/>
    <property type="match status" value="1"/>
</dbReference>
<name>RRP36_PODAN</name>
<accession>B2B720</accession>
<accession>A0A090CDP7</accession>
<organism>
    <name type="scientific">Podospora anserina (strain S / ATCC MYA-4624 / DSM 980 / FGSC 10383)</name>
    <name type="common">Pleurage anserina</name>
    <dbReference type="NCBI Taxonomy" id="515849"/>
    <lineage>
        <taxon>Eukaryota</taxon>
        <taxon>Fungi</taxon>
        <taxon>Dikarya</taxon>
        <taxon>Ascomycota</taxon>
        <taxon>Pezizomycotina</taxon>
        <taxon>Sordariomycetes</taxon>
        <taxon>Sordariomycetidae</taxon>
        <taxon>Sordariales</taxon>
        <taxon>Podosporaceae</taxon>
        <taxon>Podospora</taxon>
        <taxon>Podospora anserina</taxon>
    </lineage>
</organism>